<organism>
    <name type="scientific">Bacillus cereus (strain ATCC 10987 / NRS 248)</name>
    <dbReference type="NCBI Taxonomy" id="222523"/>
    <lineage>
        <taxon>Bacteria</taxon>
        <taxon>Bacillati</taxon>
        <taxon>Bacillota</taxon>
        <taxon>Bacilli</taxon>
        <taxon>Bacillales</taxon>
        <taxon>Bacillaceae</taxon>
        <taxon>Bacillus</taxon>
        <taxon>Bacillus cereus group</taxon>
    </lineage>
</organism>
<gene>
    <name evidence="1" type="primary">gcvT</name>
    <name type="ordered locus">BCE_4305</name>
</gene>
<reference key="1">
    <citation type="journal article" date="2004" name="Nucleic Acids Res.">
        <title>The genome sequence of Bacillus cereus ATCC 10987 reveals metabolic adaptations and a large plasmid related to Bacillus anthracis pXO1.</title>
        <authorList>
            <person name="Rasko D.A."/>
            <person name="Ravel J."/>
            <person name="Oekstad O.A."/>
            <person name="Helgason E."/>
            <person name="Cer R.Z."/>
            <person name="Jiang L."/>
            <person name="Shores K.A."/>
            <person name="Fouts D.E."/>
            <person name="Tourasse N.J."/>
            <person name="Angiuoli S.V."/>
            <person name="Kolonay J.F."/>
            <person name="Nelson W.C."/>
            <person name="Kolstoe A.-B."/>
            <person name="Fraser C.M."/>
            <person name="Read T.D."/>
        </authorList>
    </citation>
    <scope>NUCLEOTIDE SEQUENCE [LARGE SCALE GENOMIC DNA]</scope>
    <source>
        <strain>ATCC 10987 / NRS 248</strain>
    </source>
</reference>
<accession>Q730W1</accession>
<dbReference type="EC" id="2.1.2.10" evidence="1"/>
<dbReference type="EMBL" id="AE017194">
    <property type="protein sequence ID" value="AAS43206.1"/>
    <property type="molecule type" value="Genomic_DNA"/>
</dbReference>
<dbReference type="SMR" id="Q730W1"/>
<dbReference type="KEGG" id="bca:BCE_4305"/>
<dbReference type="HOGENOM" id="CLU_007884_10_2_9"/>
<dbReference type="Proteomes" id="UP000002527">
    <property type="component" value="Chromosome"/>
</dbReference>
<dbReference type="GO" id="GO:0005829">
    <property type="term" value="C:cytosol"/>
    <property type="evidence" value="ECO:0007669"/>
    <property type="project" value="TreeGrafter"/>
</dbReference>
<dbReference type="GO" id="GO:0005960">
    <property type="term" value="C:glycine cleavage complex"/>
    <property type="evidence" value="ECO:0007669"/>
    <property type="project" value="InterPro"/>
</dbReference>
<dbReference type="GO" id="GO:0004047">
    <property type="term" value="F:aminomethyltransferase activity"/>
    <property type="evidence" value="ECO:0007669"/>
    <property type="project" value="UniProtKB-UniRule"/>
</dbReference>
<dbReference type="GO" id="GO:0008483">
    <property type="term" value="F:transaminase activity"/>
    <property type="evidence" value="ECO:0007669"/>
    <property type="project" value="UniProtKB-KW"/>
</dbReference>
<dbReference type="GO" id="GO:0019464">
    <property type="term" value="P:glycine decarboxylation via glycine cleavage system"/>
    <property type="evidence" value="ECO:0007669"/>
    <property type="project" value="UniProtKB-UniRule"/>
</dbReference>
<dbReference type="FunFam" id="2.40.30.110:FF:000003">
    <property type="entry name" value="Aminomethyltransferase"/>
    <property type="match status" value="1"/>
</dbReference>
<dbReference type="FunFam" id="3.30.70.1400:FF:000001">
    <property type="entry name" value="Aminomethyltransferase"/>
    <property type="match status" value="1"/>
</dbReference>
<dbReference type="FunFam" id="4.10.1250.10:FF:000001">
    <property type="entry name" value="Aminomethyltransferase"/>
    <property type="match status" value="1"/>
</dbReference>
<dbReference type="Gene3D" id="2.40.30.110">
    <property type="entry name" value="Aminomethyltransferase beta-barrel domains"/>
    <property type="match status" value="1"/>
</dbReference>
<dbReference type="Gene3D" id="3.30.70.1400">
    <property type="entry name" value="Aminomethyltransferase beta-barrel domains"/>
    <property type="match status" value="1"/>
</dbReference>
<dbReference type="Gene3D" id="4.10.1250.10">
    <property type="entry name" value="Aminomethyltransferase fragment"/>
    <property type="match status" value="1"/>
</dbReference>
<dbReference type="Gene3D" id="3.30.1360.120">
    <property type="entry name" value="Probable tRNA modification gtpase trme, domain 1"/>
    <property type="match status" value="1"/>
</dbReference>
<dbReference type="HAMAP" id="MF_00259">
    <property type="entry name" value="GcvT"/>
    <property type="match status" value="1"/>
</dbReference>
<dbReference type="InterPro" id="IPR006223">
    <property type="entry name" value="GCS_T"/>
</dbReference>
<dbReference type="InterPro" id="IPR022903">
    <property type="entry name" value="GCS_T_bac"/>
</dbReference>
<dbReference type="InterPro" id="IPR013977">
    <property type="entry name" value="GCST_C"/>
</dbReference>
<dbReference type="InterPro" id="IPR006222">
    <property type="entry name" value="GCV_T_N"/>
</dbReference>
<dbReference type="InterPro" id="IPR028896">
    <property type="entry name" value="GcvT/YgfZ/DmdA"/>
</dbReference>
<dbReference type="InterPro" id="IPR029043">
    <property type="entry name" value="GcvT/YgfZ_C"/>
</dbReference>
<dbReference type="InterPro" id="IPR027266">
    <property type="entry name" value="TrmE/GcvT_dom1"/>
</dbReference>
<dbReference type="NCBIfam" id="TIGR00528">
    <property type="entry name" value="gcvT"/>
    <property type="match status" value="1"/>
</dbReference>
<dbReference type="NCBIfam" id="NF001567">
    <property type="entry name" value="PRK00389.1"/>
    <property type="match status" value="1"/>
</dbReference>
<dbReference type="PANTHER" id="PTHR43757">
    <property type="entry name" value="AMINOMETHYLTRANSFERASE"/>
    <property type="match status" value="1"/>
</dbReference>
<dbReference type="PANTHER" id="PTHR43757:SF2">
    <property type="entry name" value="AMINOMETHYLTRANSFERASE, MITOCHONDRIAL"/>
    <property type="match status" value="1"/>
</dbReference>
<dbReference type="Pfam" id="PF01571">
    <property type="entry name" value="GCV_T"/>
    <property type="match status" value="1"/>
</dbReference>
<dbReference type="Pfam" id="PF08669">
    <property type="entry name" value="GCV_T_C"/>
    <property type="match status" value="1"/>
</dbReference>
<dbReference type="PIRSF" id="PIRSF006487">
    <property type="entry name" value="GcvT"/>
    <property type="match status" value="1"/>
</dbReference>
<dbReference type="SUPFAM" id="SSF101790">
    <property type="entry name" value="Aminomethyltransferase beta-barrel domain"/>
    <property type="match status" value="1"/>
</dbReference>
<dbReference type="SUPFAM" id="SSF103025">
    <property type="entry name" value="Folate-binding domain"/>
    <property type="match status" value="1"/>
</dbReference>
<name>GCST_BACC1</name>
<proteinExistence type="inferred from homology"/>
<protein>
    <recommendedName>
        <fullName evidence="1">Aminomethyltransferase</fullName>
        <ecNumber evidence="1">2.1.2.10</ecNumber>
    </recommendedName>
    <alternativeName>
        <fullName evidence="1">Glycine cleavage system T protein</fullName>
    </alternativeName>
</protein>
<keyword id="KW-0032">Aminotransferase</keyword>
<keyword id="KW-0808">Transferase</keyword>
<evidence type="ECO:0000255" key="1">
    <source>
        <dbReference type="HAMAP-Rule" id="MF_00259"/>
    </source>
</evidence>
<sequence length="366" mass="40233">MITLQRTPLFDVYAKYGGKTIDFGGWELPVQFSSIKEEHEAVRTAAGLFDVSHMGEVEVKGVDSLAFLQRVVTNDVSTLKVGGAQYTAMCYENGGTVDDLLIYKRGEEDYLLVINASNIEKDYEWLASHVIGDATVVNVSSEVAQLAIQGPKAEGILQKVVSEDLKEIKFFKFKNDILVDGIPALVSRTGYTGEDGFEIYCKSEDAAKLWEKLLEVGAEEGLKPCGLGARDTLRFEATLPLYGQELSKDITPVEAGIGFAVKPNKEADFFGKATLKEQKENGAPRKLVGIEVIERGIPRTHYPVFIGEEKIGEVTSGTQSPTLKKSIGLALIDVKYAAVDTEVEIEIRNKRVKAVVVPTPFYKRSK</sequence>
<feature type="chain" id="PRO_0000122536" description="Aminomethyltransferase">
    <location>
        <begin position="1"/>
        <end position="366"/>
    </location>
</feature>
<comment type="function">
    <text evidence="1">The glycine cleavage system catalyzes the degradation of glycine.</text>
</comment>
<comment type="catalytic activity">
    <reaction evidence="1">
        <text>N(6)-[(R)-S(8)-aminomethyldihydrolipoyl]-L-lysyl-[protein] + (6S)-5,6,7,8-tetrahydrofolate = N(6)-[(R)-dihydrolipoyl]-L-lysyl-[protein] + (6R)-5,10-methylene-5,6,7,8-tetrahydrofolate + NH4(+)</text>
        <dbReference type="Rhea" id="RHEA:16945"/>
        <dbReference type="Rhea" id="RHEA-COMP:10475"/>
        <dbReference type="Rhea" id="RHEA-COMP:10492"/>
        <dbReference type="ChEBI" id="CHEBI:15636"/>
        <dbReference type="ChEBI" id="CHEBI:28938"/>
        <dbReference type="ChEBI" id="CHEBI:57453"/>
        <dbReference type="ChEBI" id="CHEBI:83100"/>
        <dbReference type="ChEBI" id="CHEBI:83143"/>
        <dbReference type="EC" id="2.1.2.10"/>
    </reaction>
</comment>
<comment type="subunit">
    <text evidence="1">The glycine cleavage system is composed of four proteins: P, T, L and H.</text>
</comment>
<comment type="similarity">
    <text evidence="1">Belongs to the GcvT family.</text>
</comment>